<comment type="catalytic activity">
    <reaction evidence="2">
        <text>GTP + H2O = 7,8-dihydroneopterin 3'-triphosphate + formate + H(+)</text>
        <dbReference type="Rhea" id="RHEA:17473"/>
        <dbReference type="ChEBI" id="CHEBI:15377"/>
        <dbReference type="ChEBI" id="CHEBI:15378"/>
        <dbReference type="ChEBI" id="CHEBI:15740"/>
        <dbReference type="ChEBI" id="CHEBI:37565"/>
        <dbReference type="ChEBI" id="CHEBI:58462"/>
        <dbReference type="EC" id="3.5.4.16"/>
    </reaction>
</comment>
<comment type="pathway">
    <text evidence="2">Cofactor biosynthesis; 7,8-dihydroneopterin triphosphate biosynthesis; 7,8-dihydroneopterin triphosphate from GTP: step 1/1.</text>
</comment>
<comment type="subunit">
    <text evidence="1">Toroid-shaped homodecamer, composed of two pentamers of five dimers.</text>
</comment>
<comment type="similarity">
    <text evidence="2">Belongs to the GTP cyclohydrolase I family.</text>
</comment>
<reference key="1">
    <citation type="journal article" date="2007" name="Genome Biol.">
        <title>Characterization and modeling of the Haemophilus influenzae core and supragenomes based on the complete genomic sequences of Rd and 12 clinical nontypeable strains.</title>
        <authorList>
            <person name="Hogg J.S."/>
            <person name="Hu F.Z."/>
            <person name="Janto B."/>
            <person name="Boissy R."/>
            <person name="Hayes J."/>
            <person name="Keefe R."/>
            <person name="Post J.C."/>
            <person name="Ehrlich G.D."/>
        </authorList>
    </citation>
    <scope>NUCLEOTIDE SEQUENCE [LARGE SCALE GENOMIC DNA]</scope>
    <source>
        <strain>PittEE</strain>
    </source>
</reference>
<organism>
    <name type="scientific">Haemophilus influenzae (strain PittEE)</name>
    <dbReference type="NCBI Taxonomy" id="374930"/>
    <lineage>
        <taxon>Bacteria</taxon>
        <taxon>Pseudomonadati</taxon>
        <taxon>Pseudomonadota</taxon>
        <taxon>Gammaproteobacteria</taxon>
        <taxon>Pasteurellales</taxon>
        <taxon>Pasteurellaceae</taxon>
        <taxon>Haemophilus</taxon>
    </lineage>
</organism>
<gene>
    <name evidence="2" type="primary">folE</name>
    <name type="ordered locus">CGSHiEE_04835</name>
</gene>
<accession>A5UC59</accession>
<evidence type="ECO:0000250" key="1"/>
<evidence type="ECO:0000255" key="2">
    <source>
        <dbReference type="HAMAP-Rule" id="MF_00223"/>
    </source>
</evidence>
<sequence>MSKISLDALNVRNALIEKGIETPMIDPTQAKDERRESIAKHMHEVMKLIGLDLRDDSLEETPNRLAKMFIDEIFSGMDYANFPKMTKIKNQMKVSEMVQVNDITLTSTCEHHFVTIDGKVCVAYYPKDWVIGLSKINRIVSFFAQRPQVQERLTEQLLTAFQTILETDDVAVYVKATHFCVKARGIRDTNSYTVTSAYGGVFLEDRDTRKEFLATVQK</sequence>
<dbReference type="EC" id="3.5.4.16" evidence="2"/>
<dbReference type="EMBL" id="CP000671">
    <property type="protein sequence ID" value="ABQ98360.1"/>
    <property type="molecule type" value="Genomic_DNA"/>
</dbReference>
<dbReference type="SMR" id="A5UC59"/>
<dbReference type="KEGG" id="hip:CGSHiEE_04835"/>
<dbReference type="HOGENOM" id="CLU_049768_3_2_6"/>
<dbReference type="UniPathway" id="UPA00848">
    <property type="reaction ID" value="UER00151"/>
</dbReference>
<dbReference type="GO" id="GO:0005737">
    <property type="term" value="C:cytoplasm"/>
    <property type="evidence" value="ECO:0007669"/>
    <property type="project" value="TreeGrafter"/>
</dbReference>
<dbReference type="GO" id="GO:0005525">
    <property type="term" value="F:GTP binding"/>
    <property type="evidence" value="ECO:0007669"/>
    <property type="project" value="UniProtKB-KW"/>
</dbReference>
<dbReference type="GO" id="GO:0003934">
    <property type="term" value="F:GTP cyclohydrolase I activity"/>
    <property type="evidence" value="ECO:0007669"/>
    <property type="project" value="UniProtKB-UniRule"/>
</dbReference>
<dbReference type="GO" id="GO:0008270">
    <property type="term" value="F:zinc ion binding"/>
    <property type="evidence" value="ECO:0007669"/>
    <property type="project" value="UniProtKB-UniRule"/>
</dbReference>
<dbReference type="GO" id="GO:0006730">
    <property type="term" value="P:one-carbon metabolic process"/>
    <property type="evidence" value="ECO:0007669"/>
    <property type="project" value="UniProtKB-UniRule"/>
</dbReference>
<dbReference type="GO" id="GO:0006729">
    <property type="term" value="P:tetrahydrobiopterin biosynthetic process"/>
    <property type="evidence" value="ECO:0007669"/>
    <property type="project" value="TreeGrafter"/>
</dbReference>
<dbReference type="GO" id="GO:0046654">
    <property type="term" value="P:tetrahydrofolate biosynthetic process"/>
    <property type="evidence" value="ECO:0007669"/>
    <property type="project" value="UniProtKB-UniRule"/>
</dbReference>
<dbReference type="CDD" id="cd00642">
    <property type="entry name" value="GTP_cyclohydro1"/>
    <property type="match status" value="1"/>
</dbReference>
<dbReference type="FunFam" id="3.30.1130.10:FF:000001">
    <property type="entry name" value="GTP cyclohydrolase 1"/>
    <property type="match status" value="1"/>
</dbReference>
<dbReference type="Gene3D" id="1.10.286.10">
    <property type="match status" value="1"/>
</dbReference>
<dbReference type="Gene3D" id="3.30.1130.10">
    <property type="match status" value="1"/>
</dbReference>
<dbReference type="HAMAP" id="MF_00223">
    <property type="entry name" value="FolE"/>
    <property type="match status" value="1"/>
</dbReference>
<dbReference type="InterPro" id="IPR043133">
    <property type="entry name" value="GTP-CH-I_C/QueF"/>
</dbReference>
<dbReference type="InterPro" id="IPR043134">
    <property type="entry name" value="GTP-CH-I_N"/>
</dbReference>
<dbReference type="InterPro" id="IPR001474">
    <property type="entry name" value="GTP_CycHdrlase_I"/>
</dbReference>
<dbReference type="InterPro" id="IPR018234">
    <property type="entry name" value="GTP_CycHdrlase_I_CS"/>
</dbReference>
<dbReference type="InterPro" id="IPR020602">
    <property type="entry name" value="GTP_CycHdrlase_I_dom"/>
</dbReference>
<dbReference type="NCBIfam" id="TIGR00063">
    <property type="entry name" value="folE"/>
    <property type="match status" value="1"/>
</dbReference>
<dbReference type="NCBIfam" id="NF006824">
    <property type="entry name" value="PRK09347.1-1"/>
    <property type="match status" value="1"/>
</dbReference>
<dbReference type="NCBIfam" id="NF006826">
    <property type="entry name" value="PRK09347.1-3"/>
    <property type="match status" value="1"/>
</dbReference>
<dbReference type="PANTHER" id="PTHR11109:SF7">
    <property type="entry name" value="GTP CYCLOHYDROLASE 1"/>
    <property type="match status" value="1"/>
</dbReference>
<dbReference type="PANTHER" id="PTHR11109">
    <property type="entry name" value="GTP CYCLOHYDROLASE I"/>
    <property type="match status" value="1"/>
</dbReference>
<dbReference type="Pfam" id="PF01227">
    <property type="entry name" value="GTP_cyclohydroI"/>
    <property type="match status" value="1"/>
</dbReference>
<dbReference type="SUPFAM" id="SSF55620">
    <property type="entry name" value="Tetrahydrobiopterin biosynthesis enzymes-like"/>
    <property type="match status" value="1"/>
</dbReference>
<dbReference type="PROSITE" id="PS00859">
    <property type="entry name" value="GTP_CYCLOHYDROL_1_1"/>
    <property type="match status" value="1"/>
</dbReference>
<dbReference type="PROSITE" id="PS00860">
    <property type="entry name" value="GTP_CYCLOHYDROL_1_2"/>
    <property type="match status" value="1"/>
</dbReference>
<feature type="chain" id="PRO_1000043695" description="GTP cyclohydrolase 1">
    <location>
        <begin position="1"/>
        <end position="218"/>
    </location>
</feature>
<feature type="binding site" evidence="2">
    <location>
        <position position="109"/>
    </location>
    <ligand>
        <name>Zn(2+)</name>
        <dbReference type="ChEBI" id="CHEBI:29105"/>
    </ligand>
</feature>
<feature type="binding site" evidence="2">
    <location>
        <position position="112"/>
    </location>
    <ligand>
        <name>Zn(2+)</name>
        <dbReference type="ChEBI" id="CHEBI:29105"/>
    </ligand>
</feature>
<feature type="binding site" evidence="2">
    <location>
        <position position="180"/>
    </location>
    <ligand>
        <name>Zn(2+)</name>
        <dbReference type="ChEBI" id="CHEBI:29105"/>
    </ligand>
</feature>
<proteinExistence type="inferred from homology"/>
<keyword id="KW-0342">GTP-binding</keyword>
<keyword id="KW-0378">Hydrolase</keyword>
<keyword id="KW-0479">Metal-binding</keyword>
<keyword id="KW-0547">Nucleotide-binding</keyword>
<keyword id="KW-0554">One-carbon metabolism</keyword>
<keyword id="KW-0862">Zinc</keyword>
<protein>
    <recommendedName>
        <fullName evidence="2">GTP cyclohydrolase 1</fullName>
        <ecNumber evidence="2">3.5.4.16</ecNumber>
    </recommendedName>
    <alternativeName>
        <fullName evidence="2">GTP cyclohydrolase I</fullName>
        <shortName evidence="2">GTP-CH-I</shortName>
    </alternativeName>
</protein>
<name>GCH1_HAEIE</name>